<organism>
    <name type="scientific">Oryza sativa subsp. japonica</name>
    <name type="common">Rice</name>
    <dbReference type="NCBI Taxonomy" id="39947"/>
    <lineage>
        <taxon>Eukaryota</taxon>
        <taxon>Viridiplantae</taxon>
        <taxon>Streptophyta</taxon>
        <taxon>Embryophyta</taxon>
        <taxon>Tracheophyta</taxon>
        <taxon>Spermatophyta</taxon>
        <taxon>Magnoliopsida</taxon>
        <taxon>Liliopsida</taxon>
        <taxon>Poales</taxon>
        <taxon>Poaceae</taxon>
        <taxon>BOP clade</taxon>
        <taxon>Oryzoideae</taxon>
        <taxon>Oryzeae</taxon>
        <taxon>Oryzinae</taxon>
        <taxon>Oryza</taxon>
        <taxon>Oryza sativa</taxon>
    </lineage>
</organism>
<protein>
    <recommendedName>
        <fullName>Calcium and calcium/calmodulin-dependent serine/threonine-protein kinase</fullName>
        <shortName>OsCCaMK</shortName>
        <ecNumber>2.7.11.17</ecNumber>
    </recommendedName>
</protein>
<reference key="1">
    <citation type="journal article" date="2005" name="Mol. Genet. Genomics">
        <title>A fine physical map of the rice chromosome 5.</title>
        <authorList>
            <person name="Cheng C.-H."/>
            <person name="Chung M.C."/>
            <person name="Liu S.-M."/>
            <person name="Chen S.-K."/>
            <person name="Kao F.Y."/>
            <person name="Lin S.-J."/>
            <person name="Hsiao S.-H."/>
            <person name="Tseng I.C."/>
            <person name="Hsing Y.-I.C."/>
            <person name="Wu H.-P."/>
            <person name="Chen C.-S."/>
            <person name="Shaw J.-F."/>
            <person name="Wu J."/>
            <person name="Matsumoto T."/>
            <person name="Sasaki T."/>
            <person name="Chen H.-C."/>
            <person name="Chow T.-Y."/>
        </authorList>
    </citation>
    <scope>NUCLEOTIDE SEQUENCE [LARGE SCALE GENOMIC DNA]</scope>
    <source>
        <strain>cv. Nipponbare</strain>
    </source>
</reference>
<reference key="2">
    <citation type="journal article" date="2005" name="Nature">
        <title>The map-based sequence of the rice genome.</title>
        <authorList>
            <consortium name="International rice genome sequencing project (IRGSP)"/>
        </authorList>
    </citation>
    <scope>NUCLEOTIDE SEQUENCE [LARGE SCALE GENOMIC DNA]</scope>
    <source>
        <strain>cv. Nipponbare</strain>
    </source>
</reference>
<reference key="3">
    <citation type="journal article" date="2008" name="Nucleic Acids Res.">
        <title>The rice annotation project database (RAP-DB): 2008 update.</title>
        <authorList>
            <consortium name="The rice annotation project (RAP)"/>
        </authorList>
    </citation>
    <scope>GENOME REANNOTATION</scope>
    <source>
        <strain>cv. Nipponbare</strain>
    </source>
</reference>
<reference key="4">
    <citation type="journal article" date="2013" name="Rice">
        <title>Improvement of the Oryza sativa Nipponbare reference genome using next generation sequence and optical map data.</title>
        <authorList>
            <person name="Kawahara Y."/>
            <person name="de la Bastide M."/>
            <person name="Hamilton J.P."/>
            <person name="Kanamori H."/>
            <person name="McCombie W.R."/>
            <person name="Ouyang S."/>
            <person name="Schwartz D.C."/>
            <person name="Tanaka T."/>
            <person name="Wu J."/>
            <person name="Zhou S."/>
            <person name="Childs K.L."/>
            <person name="Davidson R.M."/>
            <person name="Lin H."/>
            <person name="Quesada-Ocampo L."/>
            <person name="Vaillancourt B."/>
            <person name="Sakai H."/>
            <person name="Lee S.S."/>
            <person name="Kim J."/>
            <person name="Numa H."/>
            <person name="Itoh T."/>
            <person name="Buell C.R."/>
            <person name="Matsumoto T."/>
        </authorList>
    </citation>
    <scope>GENOME REANNOTATION</scope>
    <source>
        <strain>cv. Nipponbare</strain>
    </source>
</reference>
<reference key="5">
    <citation type="journal article" date="2005" name="PLoS Biol.">
        <title>The genomes of Oryza sativa: a history of duplications.</title>
        <authorList>
            <person name="Yu J."/>
            <person name="Wang J."/>
            <person name="Lin W."/>
            <person name="Li S."/>
            <person name="Li H."/>
            <person name="Zhou J."/>
            <person name="Ni P."/>
            <person name="Dong W."/>
            <person name="Hu S."/>
            <person name="Zeng C."/>
            <person name="Zhang J."/>
            <person name="Zhang Y."/>
            <person name="Li R."/>
            <person name="Xu Z."/>
            <person name="Li S."/>
            <person name="Li X."/>
            <person name="Zheng H."/>
            <person name="Cong L."/>
            <person name="Lin L."/>
            <person name="Yin J."/>
            <person name="Geng J."/>
            <person name="Li G."/>
            <person name="Shi J."/>
            <person name="Liu J."/>
            <person name="Lv H."/>
            <person name="Li J."/>
            <person name="Wang J."/>
            <person name="Deng Y."/>
            <person name="Ran L."/>
            <person name="Shi X."/>
            <person name="Wang X."/>
            <person name="Wu Q."/>
            <person name="Li C."/>
            <person name="Ren X."/>
            <person name="Wang J."/>
            <person name="Wang X."/>
            <person name="Li D."/>
            <person name="Liu D."/>
            <person name="Zhang X."/>
            <person name="Ji Z."/>
            <person name="Zhao W."/>
            <person name="Sun Y."/>
            <person name="Zhang Z."/>
            <person name="Bao J."/>
            <person name="Han Y."/>
            <person name="Dong L."/>
            <person name="Ji J."/>
            <person name="Chen P."/>
            <person name="Wu S."/>
            <person name="Liu J."/>
            <person name="Xiao Y."/>
            <person name="Bu D."/>
            <person name="Tan J."/>
            <person name="Yang L."/>
            <person name="Ye C."/>
            <person name="Zhang J."/>
            <person name="Xu J."/>
            <person name="Zhou Y."/>
            <person name="Yu Y."/>
            <person name="Zhang B."/>
            <person name="Zhuang S."/>
            <person name="Wei H."/>
            <person name="Liu B."/>
            <person name="Lei M."/>
            <person name="Yu H."/>
            <person name="Li Y."/>
            <person name="Xu H."/>
            <person name="Wei S."/>
            <person name="He X."/>
            <person name="Fang L."/>
            <person name="Zhang Z."/>
            <person name="Zhang Y."/>
            <person name="Huang X."/>
            <person name="Su Z."/>
            <person name="Tong W."/>
            <person name="Li J."/>
            <person name="Tong Z."/>
            <person name="Li S."/>
            <person name="Ye J."/>
            <person name="Wang L."/>
            <person name="Fang L."/>
            <person name="Lei T."/>
            <person name="Chen C.-S."/>
            <person name="Chen H.-C."/>
            <person name="Xu Z."/>
            <person name="Li H."/>
            <person name="Huang H."/>
            <person name="Zhang F."/>
            <person name="Xu H."/>
            <person name="Li N."/>
            <person name="Zhao C."/>
            <person name="Li S."/>
            <person name="Dong L."/>
            <person name="Huang Y."/>
            <person name="Li L."/>
            <person name="Xi Y."/>
            <person name="Qi Q."/>
            <person name="Li W."/>
            <person name="Zhang B."/>
            <person name="Hu W."/>
            <person name="Zhang Y."/>
            <person name="Tian X."/>
            <person name="Jiao Y."/>
            <person name="Liang X."/>
            <person name="Jin J."/>
            <person name="Gao L."/>
            <person name="Zheng W."/>
            <person name="Hao B."/>
            <person name="Liu S.-M."/>
            <person name="Wang W."/>
            <person name="Yuan L."/>
            <person name="Cao M."/>
            <person name="McDermott J."/>
            <person name="Samudrala R."/>
            <person name="Wang J."/>
            <person name="Wong G.K.-S."/>
            <person name="Yang H."/>
        </authorList>
    </citation>
    <scope>NUCLEOTIDE SEQUENCE [LARGE SCALE GENOMIC DNA]</scope>
    <source>
        <strain>cv. Nipponbare</strain>
    </source>
</reference>
<reference key="6">
    <citation type="journal article" date="2003" name="Science">
        <title>Collection, mapping, and annotation of over 28,000 cDNA clones from japonica rice.</title>
        <authorList>
            <consortium name="The rice full-length cDNA consortium"/>
        </authorList>
    </citation>
    <scope>NUCLEOTIDE SEQUENCE [LARGE SCALE MRNA]</scope>
    <source>
        <strain>cv. Nipponbare</strain>
    </source>
</reference>
<reference key="7">
    <citation type="journal article" date="2006" name="Mol. Plant Microbe Interact.">
        <title>A rice calcium- and calmodulin-dependent protein kinase restores nodulation to a legume mutant.</title>
        <authorList>
            <person name="Godfroy O."/>
            <person name="Debelle F."/>
            <person name="Timmers T."/>
            <person name="Rosenberg C."/>
        </authorList>
    </citation>
    <scope>IDENTIFICATION</scope>
    <scope>FUNCTION</scope>
</reference>
<reference key="8">
    <citation type="journal article" date="2007" name="Plant Physiol.">
        <title>Fungal symbiosis in rice requires an ortholog of a legume common symbiosis gene encoding a Ca2+/calmodulin-dependent protein kinase.</title>
        <authorList>
            <person name="Chen C."/>
            <person name="Gao M."/>
            <person name="Liu J."/>
            <person name="Zhu H."/>
        </authorList>
    </citation>
    <scope>IDENTIFICATION</scope>
    <scope>FUNCTION</scope>
    <scope>TISSUE SPECIFICITY</scope>
    <scope>INDUCTION</scope>
</reference>
<reference key="9">
    <citation type="journal article" date="2008" name="Plant Cell Physiol.">
        <title>Divergence of evolutionary ways among common sym genes: CASTOR and CCaMK show functional conservation between two symbiosis systems and constitute the root of a common signaling pathway.</title>
        <authorList>
            <person name="Banba M."/>
            <person name="Gutjahr C."/>
            <person name="Miyao A."/>
            <person name="Hirochika H."/>
            <person name="Paszkowski U."/>
            <person name="Kouchi H."/>
            <person name="Imaizumi-Anraku H."/>
        </authorList>
    </citation>
    <scope>FUNCTION</scope>
</reference>
<reference key="10">
    <citation type="journal article" date="2012" name="Mol. Plant">
        <title>OsDMI3 is a novel component of abscisic acid signaling in the induction of antioxidant defense in leaves of rice.</title>
        <authorList>
            <person name="Shi B."/>
            <person name="Ni L."/>
            <person name="Zhang A."/>
            <person name="Cao J."/>
            <person name="Zhang H."/>
            <person name="Qin T."/>
            <person name="Tan M."/>
            <person name="Zhang J."/>
            <person name="Jiang M."/>
        </authorList>
    </citation>
    <scope>FUNCTION</scope>
    <scope>SUBCELLULAR LOCATION</scope>
    <scope>INDUCTION</scope>
</reference>
<reference key="11">
    <citation type="journal article" date="2014" name="Plant Cell Environ.">
        <title>OsDMI3-mediated activation of OsMPK1 regulates the activities of antioxidant enzymes in abscisic acid signalling in rice.</title>
        <authorList>
            <person name="Shi B."/>
            <person name="Ni L."/>
            <person name="Liu Y."/>
            <person name="Zhang A."/>
            <person name="Tan M."/>
            <person name="Jiang M."/>
        </authorList>
    </citation>
    <scope>FUNCTION</scope>
</reference>
<gene>
    <name type="primary">CCAMK</name>
    <name type="synonym">DMI3</name>
    <name type="ordered locus">Os05g0489900</name>
    <name type="ordered locus">LOC_Os05g41090</name>
    <name type="ORF">OJ1119_H02.20</name>
    <name type="ORF">OsJ_19014</name>
</gene>
<accession>Q6AVM3</accession>
<accession>A0A0P0WNT9</accession>
<keyword id="KW-0067">ATP-binding</keyword>
<keyword id="KW-0106">Calcium</keyword>
<keyword id="KW-0112">Calmodulin-binding</keyword>
<keyword id="KW-1003">Cell membrane</keyword>
<keyword id="KW-0175">Coiled coil</keyword>
<keyword id="KW-0963">Cytoplasm</keyword>
<keyword id="KW-0418">Kinase</keyword>
<keyword id="KW-0472">Membrane</keyword>
<keyword id="KW-0479">Metal-binding</keyword>
<keyword id="KW-0536">Nodulation</keyword>
<keyword id="KW-0547">Nucleotide-binding</keyword>
<keyword id="KW-0539">Nucleus</keyword>
<keyword id="KW-0597">Phosphoprotein</keyword>
<keyword id="KW-1185">Reference proteome</keyword>
<keyword id="KW-0677">Repeat</keyword>
<keyword id="KW-0723">Serine/threonine-protein kinase</keyword>
<keyword id="KW-0808">Transferase</keyword>
<name>CCAMK_ORYSJ</name>
<comment type="function">
    <text evidence="6 7 8 9 10">Calcium- and calmodulin-dependent protein kinase required for arbuscular mycorrhizal (AM) symbiosis (PubMed:16673936, PubMed:17965173, PubMed:18852152). Involved in response to water deprivation stress. Required for abscisic acid-induced antioxidant defense and oxidative stress tolerance during dehydration stress (PubMed:22869603). Functions upstream of MPK1 in an abscisic acid signaling pathway that regulates the activities of antioxidant enzymes and the production of hydrogen peroxide (PubMed:23777258).</text>
</comment>
<comment type="catalytic activity">
    <reaction>
        <text>L-seryl-[protein] + ATP = O-phospho-L-seryl-[protein] + ADP + H(+)</text>
        <dbReference type="Rhea" id="RHEA:17989"/>
        <dbReference type="Rhea" id="RHEA-COMP:9863"/>
        <dbReference type="Rhea" id="RHEA-COMP:11604"/>
        <dbReference type="ChEBI" id="CHEBI:15378"/>
        <dbReference type="ChEBI" id="CHEBI:29999"/>
        <dbReference type="ChEBI" id="CHEBI:30616"/>
        <dbReference type="ChEBI" id="CHEBI:83421"/>
        <dbReference type="ChEBI" id="CHEBI:456216"/>
        <dbReference type="EC" id="2.7.11.17"/>
    </reaction>
</comment>
<comment type="catalytic activity">
    <reaction>
        <text>L-threonyl-[protein] + ATP = O-phospho-L-threonyl-[protein] + ADP + H(+)</text>
        <dbReference type="Rhea" id="RHEA:46608"/>
        <dbReference type="Rhea" id="RHEA-COMP:11060"/>
        <dbReference type="Rhea" id="RHEA-COMP:11605"/>
        <dbReference type="ChEBI" id="CHEBI:15378"/>
        <dbReference type="ChEBI" id="CHEBI:30013"/>
        <dbReference type="ChEBI" id="CHEBI:30616"/>
        <dbReference type="ChEBI" id="CHEBI:61977"/>
        <dbReference type="ChEBI" id="CHEBI:456216"/>
        <dbReference type="EC" id="2.7.11.17"/>
    </reaction>
</comment>
<comment type="subcellular location">
    <subcellularLocation>
        <location evidence="9">Nucleus</location>
    </subcellularLocation>
    <subcellularLocation>
        <location evidence="9">Cytoplasm</location>
    </subcellularLocation>
    <subcellularLocation>
        <location evidence="9">Cell membrane</location>
        <topology evidence="11">Peripheral membrane protein</topology>
    </subcellularLocation>
</comment>
<comment type="tissue specificity">
    <text evidence="7">Mainly expressed in roots and panicles. Detected in leaves, shoots and culms.</text>
</comment>
<comment type="induction">
    <text evidence="7 9">Not induced by mycorrhization (PubMed:17965173). Induced by hydrogen peroxide, abscisic acid (ABA) and dehydration (PubMed:22869603).</text>
</comment>
<comment type="PTM">
    <text evidence="1">Autophosphorylation.</text>
</comment>
<comment type="miscellaneous">
    <text>Can restore mycorrhizal and rhizobial symbiosis and induces spontaneous nodulation in a Ljccamk mutant of Lotus japonicus. Can restore nodulation and mycorrhizal symbiosis to a Medicago truncatula dmi3 mutant.</text>
</comment>
<comment type="similarity">
    <text evidence="11">Belongs to the protein kinase superfamily. CAMK Ser/Thr protein kinase family. CaMK subfamily.</text>
</comment>
<proteinExistence type="evidence at transcript level"/>
<dbReference type="EC" id="2.7.11.17"/>
<dbReference type="EMBL" id="AC097175">
    <property type="protein sequence ID" value="AAT77292.1"/>
    <property type="molecule type" value="Genomic_DNA"/>
</dbReference>
<dbReference type="EMBL" id="AP008211">
    <property type="protein sequence ID" value="BAF17809.1"/>
    <property type="molecule type" value="Genomic_DNA"/>
</dbReference>
<dbReference type="EMBL" id="AP014961">
    <property type="protein sequence ID" value="BAS94647.1"/>
    <property type="molecule type" value="Genomic_DNA"/>
</dbReference>
<dbReference type="EMBL" id="CM000142">
    <property type="protein sequence ID" value="EEE64182.1"/>
    <property type="molecule type" value="Genomic_DNA"/>
</dbReference>
<dbReference type="EMBL" id="AK070533">
    <property type="status" value="NOT_ANNOTATED_CDS"/>
    <property type="molecule type" value="mRNA"/>
</dbReference>
<dbReference type="SMR" id="Q6AVM3"/>
<dbReference type="FunCoup" id="Q6AVM3">
    <property type="interactions" value="2"/>
</dbReference>
<dbReference type="STRING" id="39947.Q6AVM3"/>
<dbReference type="PaxDb" id="39947-Q6AVM3"/>
<dbReference type="EnsemblPlants" id="Os05t0489900-01">
    <property type="protein sequence ID" value="Os05t0489900-01"/>
    <property type="gene ID" value="Os05g0489900"/>
</dbReference>
<dbReference type="Gramene" id="Os05t0489900-01">
    <property type="protein sequence ID" value="Os05t0489900-01"/>
    <property type="gene ID" value="Os05g0489900"/>
</dbReference>
<dbReference type="KEGG" id="dosa:Os05g0489900"/>
<dbReference type="eggNOG" id="KOG0032">
    <property type="taxonomic scope" value="Eukaryota"/>
</dbReference>
<dbReference type="HOGENOM" id="CLU_000288_37_4_1"/>
<dbReference type="InParanoid" id="Q6AVM3"/>
<dbReference type="OMA" id="QMIMAGE"/>
<dbReference type="Proteomes" id="UP000000763">
    <property type="component" value="Chromosome 5"/>
</dbReference>
<dbReference type="Proteomes" id="UP000007752">
    <property type="component" value="Chromosome 5"/>
</dbReference>
<dbReference type="Proteomes" id="UP000059680">
    <property type="component" value="Chromosome 5"/>
</dbReference>
<dbReference type="GO" id="GO:0005737">
    <property type="term" value="C:cytoplasm"/>
    <property type="evidence" value="ECO:0000318"/>
    <property type="project" value="GO_Central"/>
</dbReference>
<dbReference type="GO" id="GO:0005634">
    <property type="term" value="C:nucleus"/>
    <property type="evidence" value="ECO:0000318"/>
    <property type="project" value="GO_Central"/>
</dbReference>
<dbReference type="GO" id="GO:0005886">
    <property type="term" value="C:plasma membrane"/>
    <property type="evidence" value="ECO:0007669"/>
    <property type="project" value="UniProtKB-SubCell"/>
</dbReference>
<dbReference type="GO" id="GO:0005524">
    <property type="term" value="F:ATP binding"/>
    <property type="evidence" value="ECO:0007669"/>
    <property type="project" value="UniProtKB-KW"/>
</dbReference>
<dbReference type="GO" id="GO:0005509">
    <property type="term" value="F:calcium ion binding"/>
    <property type="evidence" value="ECO:0007669"/>
    <property type="project" value="InterPro"/>
</dbReference>
<dbReference type="GO" id="GO:0009931">
    <property type="term" value="F:calcium-dependent protein serine/threonine kinase activity"/>
    <property type="evidence" value="ECO:0000318"/>
    <property type="project" value="GO_Central"/>
</dbReference>
<dbReference type="GO" id="GO:0004683">
    <property type="term" value="F:calcium/calmodulin-dependent protein kinase activity"/>
    <property type="evidence" value="ECO:0000318"/>
    <property type="project" value="GO_Central"/>
</dbReference>
<dbReference type="GO" id="GO:0005516">
    <property type="term" value="F:calmodulin binding"/>
    <property type="evidence" value="ECO:0000318"/>
    <property type="project" value="GO_Central"/>
</dbReference>
<dbReference type="GO" id="GO:0106310">
    <property type="term" value="F:protein serine kinase activity"/>
    <property type="evidence" value="ECO:0007669"/>
    <property type="project" value="RHEA"/>
</dbReference>
<dbReference type="GO" id="GO:0035556">
    <property type="term" value="P:intracellular signal transduction"/>
    <property type="evidence" value="ECO:0000318"/>
    <property type="project" value="GO_Central"/>
</dbReference>
<dbReference type="GO" id="GO:0009877">
    <property type="term" value="P:nodulation"/>
    <property type="evidence" value="ECO:0007669"/>
    <property type="project" value="UniProtKB-KW"/>
</dbReference>
<dbReference type="CDD" id="cd00051">
    <property type="entry name" value="EFh"/>
    <property type="match status" value="2"/>
</dbReference>
<dbReference type="CDD" id="cd05117">
    <property type="entry name" value="STKc_CAMK"/>
    <property type="match status" value="1"/>
</dbReference>
<dbReference type="FunFam" id="1.10.510.10:FF:000610">
    <property type="entry name" value="Calcium and calcium/calmodulin-dependent serine/threonine-protein kinase"/>
    <property type="match status" value="1"/>
</dbReference>
<dbReference type="FunFam" id="3.30.200.20:FF:001144">
    <property type="entry name" value="Calcium and calcium/calmodulin-dependent serine/threonine-protein kinase DMI-3"/>
    <property type="match status" value="1"/>
</dbReference>
<dbReference type="FunFam" id="1.10.238.10:FF:000249">
    <property type="entry name" value="calcium and calcium/calmodulin-dependent serine/threonine-protein kinase DMI-3"/>
    <property type="match status" value="1"/>
</dbReference>
<dbReference type="Gene3D" id="6.10.140.620">
    <property type="match status" value="1"/>
</dbReference>
<dbReference type="Gene3D" id="1.10.238.10">
    <property type="entry name" value="EF-hand"/>
    <property type="match status" value="1"/>
</dbReference>
<dbReference type="Gene3D" id="3.30.200.20">
    <property type="entry name" value="Phosphorylase Kinase, domain 1"/>
    <property type="match status" value="2"/>
</dbReference>
<dbReference type="Gene3D" id="1.10.510.10">
    <property type="entry name" value="Transferase(Phosphotransferase) domain 1"/>
    <property type="match status" value="1"/>
</dbReference>
<dbReference type="InterPro" id="IPR050205">
    <property type="entry name" value="CDPK_Ser/Thr_kinases"/>
</dbReference>
<dbReference type="InterPro" id="IPR011992">
    <property type="entry name" value="EF-hand-dom_pair"/>
</dbReference>
<dbReference type="InterPro" id="IPR018247">
    <property type="entry name" value="EF_Hand_1_Ca_BS"/>
</dbReference>
<dbReference type="InterPro" id="IPR002048">
    <property type="entry name" value="EF_hand_dom"/>
</dbReference>
<dbReference type="InterPro" id="IPR011009">
    <property type="entry name" value="Kinase-like_dom_sf"/>
</dbReference>
<dbReference type="InterPro" id="IPR000719">
    <property type="entry name" value="Prot_kinase_dom"/>
</dbReference>
<dbReference type="InterPro" id="IPR017441">
    <property type="entry name" value="Protein_kinase_ATP_BS"/>
</dbReference>
<dbReference type="InterPro" id="IPR008271">
    <property type="entry name" value="Ser/Thr_kinase_AS"/>
</dbReference>
<dbReference type="PANTHER" id="PTHR24349">
    <property type="entry name" value="SERINE/THREONINE-PROTEIN KINASE"/>
    <property type="match status" value="1"/>
</dbReference>
<dbReference type="Pfam" id="PF13202">
    <property type="entry name" value="EF-hand_5"/>
    <property type="match status" value="1"/>
</dbReference>
<dbReference type="Pfam" id="PF13499">
    <property type="entry name" value="EF-hand_7"/>
    <property type="match status" value="1"/>
</dbReference>
<dbReference type="Pfam" id="PF00069">
    <property type="entry name" value="Pkinase"/>
    <property type="match status" value="1"/>
</dbReference>
<dbReference type="PRINTS" id="PR00450">
    <property type="entry name" value="RECOVERIN"/>
</dbReference>
<dbReference type="SMART" id="SM00054">
    <property type="entry name" value="EFh"/>
    <property type="match status" value="3"/>
</dbReference>
<dbReference type="SMART" id="SM00220">
    <property type="entry name" value="S_TKc"/>
    <property type="match status" value="1"/>
</dbReference>
<dbReference type="SUPFAM" id="SSF47473">
    <property type="entry name" value="EF-hand"/>
    <property type="match status" value="1"/>
</dbReference>
<dbReference type="SUPFAM" id="SSF56112">
    <property type="entry name" value="Protein kinase-like (PK-like)"/>
    <property type="match status" value="1"/>
</dbReference>
<dbReference type="PROSITE" id="PS00018">
    <property type="entry name" value="EF_HAND_1"/>
    <property type="match status" value="3"/>
</dbReference>
<dbReference type="PROSITE" id="PS50222">
    <property type="entry name" value="EF_HAND_2"/>
    <property type="match status" value="3"/>
</dbReference>
<dbReference type="PROSITE" id="PS00107">
    <property type="entry name" value="PROTEIN_KINASE_ATP"/>
    <property type="match status" value="1"/>
</dbReference>
<dbReference type="PROSITE" id="PS50011">
    <property type="entry name" value="PROTEIN_KINASE_DOM"/>
    <property type="match status" value="1"/>
</dbReference>
<dbReference type="PROSITE" id="PS00108">
    <property type="entry name" value="PROTEIN_KINASE_ST"/>
    <property type="match status" value="1"/>
</dbReference>
<sequence>MSKTESRKLSDDYEVVDVLGRGGFSIVRRGVSKSEEKTQVAIKTLRRLGPAMAGMKQGTKPVPGSGLPMWKQVSISDALLTNEILVMRRIVESVAPHPNVINLHDVYEDVHGVHLVLELCSGGELFDRIVGRDRYSEFDAACVIRQIASGLEALHKASIVHRDLKPENCLFSDKDEKSTLKIMDFGLSSVEDFSDPIVALFGSIDYVSPEALSRQEVSAASDMWSVGVILYILLSGCPPFHAATNREKQQRILQGEFSFQDHTWKTISSSAKDLISRLLSVQPYKRPTASDLLRHPWVIGDCAKQDLMDAEVVSKLQKFNARRKLRAAAIASVLSCKVALRTKRLRNLLGTHDLTSEELDNLRLHFGRICADGENATLSEFEQVLRAMKMDSLIPLAPRVFDLFDNNRDGTVDMREILCGFSSLRNSRGDDALRLCFQMYDADRSGCISKEELASMLRALPEECLPGDITEPGKLDEVFDQMDADSDGKVTFDEFKAAMNKDSALQDVLLSSLRPQ</sequence>
<feature type="chain" id="PRO_0000395509" description="Calcium and calcium/calmodulin-dependent serine/threonine-protein kinase">
    <location>
        <begin position="1"/>
        <end position="516"/>
    </location>
</feature>
<feature type="domain" description="Protein kinase" evidence="3">
    <location>
        <begin position="13"/>
        <end position="298"/>
    </location>
</feature>
<feature type="domain" description="EF-hand 1" evidence="4">
    <location>
        <begin position="392"/>
        <end position="427"/>
    </location>
</feature>
<feature type="domain" description="EF-hand 2" evidence="4">
    <location>
        <begin position="428"/>
        <end position="463"/>
    </location>
</feature>
<feature type="domain" description="EF-hand 3" evidence="4">
    <location>
        <begin position="470"/>
        <end position="505"/>
    </location>
</feature>
<feature type="region of interest" description="Calmodulin-binding" evidence="1">
    <location>
        <begin position="321"/>
        <end position="334"/>
    </location>
</feature>
<feature type="coiled-coil region" evidence="2">
    <location>
        <begin position="343"/>
        <end position="363"/>
    </location>
</feature>
<feature type="active site" description="Proton acceptor" evidence="3 5">
    <location>
        <position position="163"/>
    </location>
</feature>
<feature type="binding site" evidence="3">
    <location>
        <begin position="19"/>
        <end position="27"/>
    </location>
    <ligand>
        <name>ATP</name>
        <dbReference type="ChEBI" id="CHEBI:30616"/>
    </ligand>
</feature>
<feature type="binding site" evidence="3">
    <location>
        <position position="43"/>
    </location>
    <ligand>
        <name>ATP</name>
        <dbReference type="ChEBI" id="CHEBI:30616"/>
    </ligand>
</feature>
<feature type="binding site" evidence="4">
    <location>
        <position position="405"/>
    </location>
    <ligand>
        <name>Ca(2+)</name>
        <dbReference type="ChEBI" id="CHEBI:29108"/>
        <label>1</label>
    </ligand>
</feature>
<feature type="binding site" evidence="4">
    <location>
        <position position="407"/>
    </location>
    <ligand>
        <name>Ca(2+)</name>
        <dbReference type="ChEBI" id="CHEBI:29108"/>
        <label>1</label>
    </ligand>
</feature>
<feature type="binding site" evidence="4">
    <location>
        <position position="409"/>
    </location>
    <ligand>
        <name>Ca(2+)</name>
        <dbReference type="ChEBI" id="CHEBI:29108"/>
        <label>1</label>
    </ligand>
</feature>
<feature type="binding site" evidence="4">
    <location>
        <position position="411"/>
    </location>
    <ligand>
        <name>Ca(2+)</name>
        <dbReference type="ChEBI" id="CHEBI:29108"/>
        <label>1</label>
    </ligand>
</feature>
<feature type="binding site" evidence="4">
    <location>
        <position position="416"/>
    </location>
    <ligand>
        <name>Ca(2+)</name>
        <dbReference type="ChEBI" id="CHEBI:29108"/>
        <label>1</label>
    </ligand>
</feature>
<feature type="binding site" evidence="4">
    <location>
        <position position="441"/>
    </location>
    <ligand>
        <name>Ca(2+)</name>
        <dbReference type="ChEBI" id="CHEBI:29108"/>
        <label>2</label>
    </ligand>
</feature>
<feature type="binding site" evidence="4">
    <location>
        <position position="443"/>
    </location>
    <ligand>
        <name>Ca(2+)</name>
        <dbReference type="ChEBI" id="CHEBI:29108"/>
        <label>2</label>
    </ligand>
</feature>
<feature type="binding site" evidence="4">
    <location>
        <position position="445"/>
    </location>
    <ligand>
        <name>Ca(2+)</name>
        <dbReference type="ChEBI" id="CHEBI:29108"/>
        <label>2</label>
    </ligand>
</feature>
<feature type="binding site" evidence="4">
    <location>
        <position position="447"/>
    </location>
    <ligand>
        <name>Ca(2+)</name>
        <dbReference type="ChEBI" id="CHEBI:29108"/>
        <label>2</label>
    </ligand>
</feature>
<feature type="binding site" evidence="4">
    <location>
        <position position="452"/>
    </location>
    <ligand>
        <name>Ca(2+)</name>
        <dbReference type="ChEBI" id="CHEBI:29108"/>
        <label>2</label>
    </ligand>
</feature>
<feature type="binding site" evidence="4">
    <location>
        <position position="483"/>
    </location>
    <ligand>
        <name>Ca(2+)</name>
        <dbReference type="ChEBI" id="CHEBI:29108"/>
        <label>3</label>
    </ligand>
</feature>
<feature type="binding site" evidence="4">
    <location>
        <position position="485"/>
    </location>
    <ligand>
        <name>Ca(2+)</name>
        <dbReference type="ChEBI" id="CHEBI:29108"/>
        <label>3</label>
    </ligand>
</feature>
<feature type="binding site" evidence="4">
    <location>
        <position position="487"/>
    </location>
    <ligand>
        <name>Ca(2+)</name>
        <dbReference type="ChEBI" id="CHEBI:29108"/>
        <label>3</label>
    </ligand>
</feature>
<feature type="binding site" evidence="4">
    <location>
        <position position="489"/>
    </location>
    <ligand>
        <name>Ca(2+)</name>
        <dbReference type="ChEBI" id="CHEBI:29108"/>
        <label>3</label>
    </ligand>
</feature>
<feature type="binding site" evidence="4">
    <location>
        <position position="494"/>
    </location>
    <ligand>
        <name>Ca(2+)</name>
        <dbReference type="ChEBI" id="CHEBI:29108"/>
        <label>3</label>
    </ligand>
</feature>
<feature type="modified residue" description="Phosphothreonine" evidence="1">
    <location>
        <position position="263"/>
    </location>
</feature>
<feature type="sequence conflict" description="In Ref. 6; AK070533." evidence="11" ref="6">
    <original>H</original>
    <variation>R</variation>
    <location>
        <position position="295"/>
    </location>
</feature>
<evidence type="ECO:0000250" key="1"/>
<evidence type="ECO:0000255" key="2"/>
<evidence type="ECO:0000255" key="3">
    <source>
        <dbReference type="PROSITE-ProRule" id="PRU00159"/>
    </source>
</evidence>
<evidence type="ECO:0000255" key="4">
    <source>
        <dbReference type="PROSITE-ProRule" id="PRU00448"/>
    </source>
</evidence>
<evidence type="ECO:0000255" key="5">
    <source>
        <dbReference type="PROSITE-ProRule" id="PRU10027"/>
    </source>
</evidence>
<evidence type="ECO:0000269" key="6">
    <source>
    </source>
</evidence>
<evidence type="ECO:0000269" key="7">
    <source>
    </source>
</evidence>
<evidence type="ECO:0000269" key="8">
    <source>
    </source>
</evidence>
<evidence type="ECO:0000269" key="9">
    <source>
    </source>
</evidence>
<evidence type="ECO:0000269" key="10">
    <source>
    </source>
</evidence>
<evidence type="ECO:0000305" key="11"/>